<proteinExistence type="evidence at transcript level"/>
<evidence type="ECO:0000250" key="1"/>
<evidence type="ECO:0000255" key="2">
    <source>
        <dbReference type="PROSITE-ProRule" id="PRU00159"/>
    </source>
</evidence>
<evidence type="ECO:0000256" key="3">
    <source>
        <dbReference type="SAM" id="MobiDB-lite"/>
    </source>
</evidence>
<evidence type="ECO:0000269" key="4">
    <source>
    </source>
</evidence>
<evidence type="ECO:0000305" key="5"/>
<protein>
    <recommendedName>
        <fullName>Mitogen-activated protein kinase 2</fullName>
        <shortName>MAP kinase 2</shortName>
        <ecNumber>2.7.11.24</ecNumber>
    </recommendedName>
</protein>
<sequence length="394" mass="44585">MRMEGGGGGGHGHHGGGGGGHGHHGGIGGGEAQIKGTLTHGGRYVQYNVYGNLFEVSSKYVPPIRPVGRGACGIICAVVNAQTRQEVAIKKIGNAFDNQIDAKRTLREIKLLRHMDHDNVISIKDIIRPPRRENFNDVYIVYELMDTDLHHLLRSNQPLTDDHCQYFLYQVLRGLKYVHSANVLHRDLRPSNLLLNAKCDLKIGDFGLARTTNETDFMMEYVVTRWYRAPELLLNCSEYTAAIDIWSVGCILGEIVTREPLFPGKDYVHQLRLITELIGSPDDSSLGFLRSDNARRYVRSLPQYPKQQFRARFPTMSSGAMDLLERMLVFDPSKRITVDEALCHPYLASLHEIYDEPVCPAPFSFDFEQPSLTEEDIKEIIWREALKFNPEPIH</sequence>
<accession>Q5J4W4</accession>
<accession>Q0J7X3</accession>
<accession>Q6ZD93</accession>
<name>MPK2_ORYSJ</name>
<reference key="1">
    <citation type="submission" date="2003-12" db="EMBL/GenBank/DDBJ databases">
        <title>A novel protein kinase OsMAPK-like involved in the developmental regulation for rice plants.</title>
        <authorList>
            <person name="Wang Y.D."/>
            <person name="Chen X."/>
            <person name="Ye Z."/>
        </authorList>
    </citation>
    <scope>NUCLEOTIDE SEQUENCE [MRNA]</scope>
</reference>
<reference key="2">
    <citation type="journal article" date="2005" name="Nature">
        <title>The map-based sequence of the rice genome.</title>
        <authorList>
            <consortium name="International rice genome sequencing project (IRGSP)"/>
        </authorList>
    </citation>
    <scope>NUCLEOTIDE SEQUENCE [LARGE SCALE GENOMIC DNA]</scope>
    <source>
        <strain>cv. Nipponbare</strain>
    </source>
</reference>
<reference key="3">
    <citation type="journal article" date="2008" name="Nucleic Acids Res.">
        <title>The rice annotation project database (RAP-DB): 2008 update.</title>
        <authorList>
            <consortium name="The rice annotation project (RAP)"/>
        </authorList>
    </citation>
    <scope>GENOME REANNOTATION</scope>
    <source>
        <strain>cv. Nipponbare</strain>
    </source>
</reference>
<reference key="4">
    <citation type="journal article" date="2013" name="Rice">
        <title>Improvement of the Oryza sativa Nipponbare reference genome using next generation sequence and optical map data.</title>
        <authorList>
            <person name="Kawahara Y."/>
            <person name="de la Bastide M."/>
            <person name="Hamilton J.P."/>
            <person name="Kanamori H."/>
            <person name="McCombie W.R."/>
            <person name="Ouyang S."/>
            <person name="Schwartz D.C."/>
            <person name="Tanaka T."/>
            <person name="Wu J."/>
            <person name="Zhou S."/>
            <person name="Childs K.L."/>
            <person name="Davidson R.M."/>
            <person name="Lin H."/>
            <person name="Quesada-Ocampo L."/>
            <person name="Vaillancourt B."/>
            <person name="Sakai H."/>
            <person name="Lee S.S."/>
            <person name="Kim J."/>
            <person name="Numa H."/>
            <person name="Itoh T."/>
            <person name="Buell C.R."/>
            <person name="Matsumoto T."/>
        </authorList>
    </citation>
    <scope>GENOME REANNOTATION</scope>
    <source>
        <strain>cv. Nipponbare</strain>
    </source>
</reference>
<reference key="5">
    <citation type="journal article" date="2006" name="Mol. Plant Microbe Interact.">
        <title>Molecular analysis of the rice MAP kinase gene family in relation to Magnaporthe grisea infection.</title>
        <authorList>
            <person name="Reyna N.S."/>
            <person name="Yang Y."/>
        </authorList>
    </citation>
    <scope>INDUCTION</scope>
    <scope>NOMENCLATURE</scope>
</reference>
<dbReference type="EC" id="2.7.11.24"/>
<dbReference type="EMBL" id="AY506572">
    <property type="protein sequence ID" value="AAS79349.1"/>
    <property type="molecule type" value="mRNA"/>
</dbReference>
<dbReference type="EMBL" id="AP004460">
    <property type="protein sequence ID" value="BAC99508.1"/>
    <property type="status" value="ALT_INIT"/>
    <property type="molecule type" value="Genomic_DNA"/>
</dbReference>
<dbReference type="EMBL" id="AP008214">
    <property type="protein sequence ID" value="BAF22942.2"/>
    <property type="molecule type" value="Genomic_DNA"/>
</dbReference>
<dbReference type="EMBL" id="AP014964">
    <property type="protein sequence ID" value="BAT03900.1"/>
    <property type="molecule type" value="Genomic_DNA"/>
</dbReference>
<dbReference type="RefSeq" id="XP_015650444.1">
    <property type="nucleotide sequence ID" value="XM_015794958.1"/>
</dbReference>
<dbReference type="SMR" id="Q5J4W4"/>
<dbReference type="FunCoup" id="Q5J4W4">
    <property type="interactions" value="2985"/>
</dbReference>
<dbReference type="STRING" id="39947.Q5J4W4"/>
<dbReference type="PaxDb" id="39947-Q5J4W4"/>
<dbReference type="EnsemblPlants" id="Os08t0157000-00">
    <property type="protein sequence ID" value="Os08t0157000-00"/>
    <property type="gene ID" value="Os08g0157000"/>
</dbReference>
<dbReference type="Gramene" id="Os08t0157000-00">
    <property type="protein sequence ID" value="Os08t0157000-00"/>
    <property type="gene ID" value="Os08g0157000"/>
</dbReference>
<dbReference type="KEGG" id="dosa:Os08g0157000"/>
<dbReference type="eggNOG" id="KOG0660">
    <property type="taxonomic scope" value="Eukaryota"/>
</dbReference>
<dbReference type="HOGENOM" id="CLU_000288_181_1_1"/>
<dbReference type="InParanoid" id="Q5J4W4"/>
<dbReference type="OMA" id="IIWREAL"/>
<dbReference type="OrthoDB" id="192887at2759"/>
<dbReference type="Proteomes" id="UP000000763">
    <property type="component" value="Chromosome 8"/>
</dbReference>
<dbReference type="Proteomes" id="UP000059680">
    <property type="component" value="Chromosome 8"/>
</dbReference>
<dbReference type="GO" id="GO:0005737">
    <property type="term" value="C:cytoplasm"/>
    <property type="evidence" value="ECO:0000318"/>
    <property type="project" value="GO_Central"/>
</dbReference>
<dbReference type="GO" id="GO:0005634">
    <property type="term" value="C:nucleus"/>
    <property type="evidence" value="ECO:0000318"/>
    <property type="project" value="GO_Central"/>
</dbReference>
<dbReference type="GO" id="GO:0005524">
    <property type="term" value="F:ATP binding"/>
    <property type="evidence" value="ECO:0007669"/>
    <property type="project" value="UniProtKB-KW"/>
</dbReference>
<dbReference type="GO" id="GO:0004707">
    <property type="term" value="F:MAP kinase activity"/>
    <property type="evidence" value="ECO:0007669"/>
    <property type="project" value="UniProtKB-EC"/>
</dbReference>
<dbReference type="GO" id="GO:0106310">
    <property type="term" value="F:protein serine kinase activity"/>
    <property type="evidence" value="ECO:0007669"/>
    <property type="project" value="RHEA"/>
</dbReference>
<dbReference type="GO" id="GO:0004674">
    <property type="term" value="F:protein serine/threonine kinase activity"/>
    <property type="evidence" value="ECO:0000318"/>
    <property type="project" value="GO_Central"/>
</dbReference>
<dbReference type="GO" id="GO:0004713">
    <property type="term" value="F:protein tyrosine kinase activity"/>
    <property type="evidence" value="ECO:0007669"/>
    <property type="project" value="InterPro"/>
</dbReference>
<dbReference type="GO" id="GO:0035556">
    <property type="term" value="P:intracellular signal transduction"/>
    <property type="evidence" value="ECO:0000318"/>
    <property type="project" value="GO_Central"/>
</dbReference>
<dbReference type="CDD" id="cd07858">
    <property type="entry name" value="STKc_TEY_MAPK"/>
    <property type="match status" value="1"/>
</dbReference>
<dbReference type="FunFam" id="1.10.510.10:FF:000013">
    <property type="entry name" value="Mitogen-activated protein kinase"/>
    <property type="match status" value="1"/>
</dbReference>
<dbReference type="FunFam" id="3.30.200.20:FF:000046">
    <property type="entry name" value="Mitogen-activated protein kinase"/>
    <property type="match status" value="1"/>
</dbReference>
<dbReference type="Gene3D" id="3.30.200.20">
    <property type="entry name" value="Phosphorylase Kinase, domain 1"/>
    <property type="match status" value="1"/>
</dbReference>
<dbReference type="Gene3D" id="1.10.510.10">
    <property type="entry name" value="Transferase(Phosphotransferase) domain 1"/>
    <property type="match status" value="1"/>
</dbReference>
<dbReference type="InterPro" id="IPR011009">
    <property type="entry name" value="Kinase-like_dom_sf"/>
</dbReference>
<dbReference type="InterPro" id="IPR050117">
    <property type="entry name" value="MAP_kinase"/>
</dbReference>
<dbReference type="InterPro" id="IPR000719">
    <property type="entry name" value="Prot_kinase_dom"/>
</dbReference>
<dbReference type="InterPro" id="IPR008266">
    <property type="entry name" value="Tyr_kinase_AS"/>
</dbReference>
<dbReference type="InterPro" id="IPR020635">
    <property type="entry name" value="Tyr_kinase_cat_dom"/>
</dbReference>
<dbReference type="PANTHER" id="PTHR24055">
    <property type="entry name" value="MITOGEN-ACTIVATED PROTEIN KINASE"/>
    <property type="match status" value="1"/>
</dbReference>
<dbReference type="Pfam" id="PF00069">
    <property type="entry name" value="Pkinase"/>
    <property type="match status" value="1"/>
</dbReference>
<dbReference type="SMART" id="SM00219">
    <property type="entry name" value="TyrKc"/>
    <property type="match status" value="1"/>
</dbReference>
<dbReference type="SUPFAM" id="SSF56112">
    <property type="entry name" value="Protein kinase-like (PK-like)"/>
    <property type="match status" value="1"/>
</dbReference>
<dbReference type="PROSITE" id="PS50011">
    <property type="entry name" value="PROTEIN_KINASE_DOM"/>
    <property type="match status" value="1"/>
</dbReference>
<gene>
    <name type="primary">MPK2</name>
    <name type="ordered locus">Os08g0157000</name>
    <name type="ordered locus">LOC_Os08g06060</name>
    <name type="ORF">P0438H08.24</name>
</gene>
<feature type="chain" id="PRO_0000239745" description="Mitogen-activated protein kinase 2">
    <location>
        <begin position="1"/>
        <end position="394"/>
    </location>
</feature>
<feature type="domain" description="Protein kinase" evidence="2">
    <location>
        <begin position="61"/>
        <end position="347"/>
    </location>
</feature>
<feature type="region of interest" description="Disordered" evidence="3">
    <location>
        <begin position="1"/>
        <end position="33"/>
    </location>
</feature>
<feature type="compositionally biased region" description="Gly residues" evidence="3">
    <location>
        <begin position="1"/>
        <end position="31"/>
    </location>
</feature>
<feature type="active site" description="Proton acceptor" evidence="2">
    <location>
        <position position="187"/>
    </location>
</feature>
<feature type="binding site" evidence="2">
    <location>
        <begin position="67"/>
        <end position="75"/>
    </location>
    <ligand>
        <name>ATP</name>
        <dbReference type="ChEBI" id="CHEBI:30616"/>
    </ligand>
</feature>
<feature type="binding site" evidence="2">
    <location>
        <position position="90"/>
    </location>
    <ligand>
        <name>ATP</name>
        <dbReference type="ChEBI" id="CHEBI:30616"/>
    </ligand>
</feature>
<feature type="modified residue" description="Phosphotyrosine" evidence="1">
    <location>
        <position position="221"/>
    </location>
</feature>
<organism>
    <name type="scientific">Oryza sativa subsp. japonica</name>
    <name type="common">Rice</name>
    <dbReference type="NCBI Taxonomy" id="39947"/>
    <lineage>
        <taxon>Eukaryota</taxon>
        <taxon>Viridiplantae</taxon>
        <taxon>Streptophyta</taxon>
        <taxon>Embryophyta</taxon>
        <taxon>Tracheophyta</taxon>
        <taxon>Spermatophyta</taxon>
        <taxon>Magnoliopsida</taxon>
        <taxon>Liliopsida</taxon>
        <taxon>Poales</taxon>
        <taxon>Poaceae</taxon>
        <taxon>BOP clade</taxon>
        <taxon>Oryzoideae</taxon>
        <taxon>Oryzeae</taxon>
        <taxon>Oryzinae</taxon>
        <taxon>Oryza</taxon>
        <taxon>Oryza sativa</taxon>
    </lineage>
</organism>
<comment type="catalytic activity">
    <reaction>
        <text>L-seryl-[protein] + ATP = O-phospho-L-seryl-[protein] + ADP + H(+)</text>
        <dbReference type="Rhea" id="RHEA:17989"/>
        <dbReference type="Rhea" id="RHEA-COMP:9863"/>
        <dbReference type="Rhea" id="RHEA-COMP:11604"/>
        <dbReference type="ChEBI" id="CHEBI:15378"/>
        <dbReference type="ChEBI" id="CHEBI:29999"/>
        <dbReference type="ChEBI" id="CHEBI:30616"/>
        <dbReference type="ChEBI" id="CHEBI:83421"/>
        <dbReference type="ChEBI" id="CHEBI:456216"/>
        <dbReference type="EC" id="2.7.11.24"/>
    </reaction>
</comment>
<comment type="catalytic activity">
    <reaction>
        <text>L-threonyl-[protein] + ATP = O-phospho-L-threonyl-[protein] + ADP + H(+)</text>
        <dbReference type="Rhea" id="RHEA:46608"/>
        <dbReference type="Rhea" id="RHEA-COMP:11060"/>
        <dbReference type="Rhea" id="RHEA-COMP:11605"/>
        <dbReference type="ChEBI" id="CHEBI:15378"/>
        <dbReference type="ChEBI" id="CHEBI:30013"/>
        <dbReference type="ChEBI" id="CHEBI:30616"/>
        <dbReference type="ChEBI" id="CHEBI:61977"/>
        <dbReference type="ChEBI" id="CHEBI:456216"/>
        <dbReference type="EC" id="2.7.11.24"/>
    </reaction>
</comment>
<comment type="induction">
    <text evidence="4">By infection with rice blast fungus (M.grisea).</text>
</comment>
<comment type="PTM">
    <text evidence="1">The phosphorylation on Tyr-221 activates the enzyme (By similarity). A conserved Thr, which must also be phosphorylated to activate the enzyme in closely related sequences, is replaced by Met-219 in this sequence.</text>
</comment>
<comment type="similarity">
    <text evidence="5">Belongs to the protein kinase superfamily. CMGC Ser/Thr protein kinase family. MAP kinase subfamily.</text>
</comment>
<comment type="sequence caution" evidence="5">
    <conflict type="erroneous initiation">
        <sequence resource="EMBL-CDS" id="BAC99508"/>
    </conflict>
</comment>
<keyword id="KW-0067">ATP-binding</keyword>
<keyword id="KW-0418">Kinase</keyword>
<keyword id="KW-0547">Nucleotide-binding</keyword>
<keyword id="KW-0597">Phosphoprotein</keyword>
<keyword id="KW-1185">Reference proteome</keyword>
<keyword id="KW-0723">Serine/threonine-protein kinase</keyword>
<keyword id="KW-0808">Transferase</keyword>